<keyword id="KW-0012">Acyltransferase</keyword>
<keyword id="KW-0028">Amino-acid biosynthesis</keyword>
<keyword id="KW-0055">Arginine biosynthesis</keyword>
<keyword id="KW-0068">Autocatalytic cleavage</keyword>
<keyword id="KW-0963">Cytoplasm</keyword>
<keyword id="KW-0511">Multifunctional enzyme</keyword>
<keyword id="KW-0808">Transferase</keyword>
<evidence type="ECO:0000255" key="1">
    <source>
        <dbReference type="HAMAP-Rule" id="MF_01106"/>
    </source>
</evidence>
<proteinExistence type="inferred from homology"/>
<protein>
    <recommendedName>
        <fullName evidence="1">Arginine biosynthesis bifunctional protein ArgJ</fullName>
    </recommendedName>
    <domain>
        <recommendedName>
            <fullName evidence="1">Glutamate N-acetyltransferase</fullName>
            <ecNumber evidence="1">2.3.1.35</ecNumber>
        </recommendedName>
        <alternativeName>
            <fullName evidence="1">Ornithine acetyltransferase</fullName>
            <shortName evidence="1">OATase</shortName>
        </alternativeName>
        <alternativeName>
            <fullName evidence="1">Ornithine transacetylase</fullName>
        </alternativeName>
    </domain>
    <domain>
        <recommendedName>
            <fullName evidence="1">Amino-acid acetyltransferase</fullName>
            <ecNumber evidence="1">2.3.1.1</ecNumber>
        </recommendedName>
        <alternativeName>
            <fullName evidence="1">N-acetylglutamate synthase</fullName>
            <shortName evidence="1">AGSase</shortName>
        </alternativeName>
    </domain>
    <component>
        <recommendedName>
            <fullName evidence="1">Arginine biosynthesis bifunctional protein ArgJ alpha chain</fullName>
        </recommendedName>
    </component>
    <component>
        <recommendedName>
            <fullName evidence="1">Arginine biosynthesis bifunctional protein ArgJ beta chain</fullName>
        </recommendedName>
    </component>
</protein>
<name>ARGJ_DECAR</name>
<feature type="chain" id="PRO_0000227222" description="Arginine biosynthesis bifunctional protein ArgJ alpha chain" evidence="1">
    <location>
        <begin position="1"/>
        <end position="192"/>
    </location>
</feature>
<feature type="chain" id="PRO_0000227223" description="Arginine biosynthesis bifunctional protein ArgJ beta chain" evidence="1">
    <location>
        <begin position="193"/>
        <end position="408"/>
    </location>
</feature>
<feature type="active site" description="Nucleophile" evidence="1">
    <location>
        <position position="193"/>
    </location>
</feature>
<feature type="binding site" evidence="1">
    <location>
        <position position="156"/>
    </location>
    <ligand>
        <name>substrate</name>
    </ligand>
</feature>
<feature type="binding site" evidence="1">
    <location>
        <position position="182"/>
    </location>
    <ligand>
        <name>substrate</name>
    </ligand>
</feature>
<feature type="binding site" evidence="1">
    <location>
        <position position="193"/>
    </location>
    <ligand>
        <name>substrate</name>
    </ligand>
</feature>
<feature type="binding site" evidence="1">
    <location>
        <position position="279"/>
    </location>
    <ligand>
        <name>substrate</name>
    </ligand>
</feature>
<feature type="binding site" evidence="1">
    <location>
        <position position="403"/>
    </location>
    <ligand>
        <name>substrate</name>
    </ligand>
</feature>
<feature type="binding site" evidence="1">
    <location>
        <position position="408"/>
    </location>
    <ligand>
        <name>substrate</name>
    </ligand>
</feature>
<feature type="site" description="Involved in the stabilization of negative charge on the oxyanion by the formation of the oxyanion hole" evidence="1">
    <location>
        <position position="119"/>
    </location>
</feature>
<feature type="site" description="Involved in the stabilization of negative charge on the oxyanion by the formation of the oxyanion hole" evidence="1">
    <location>
        <position position="120"/>
    </location>
</feature>
<feature type="site" description="Cleavage; by autolysis" evidence="1">
    <location>
        <begin position="192"/>
        <end position="193"/>
    </location>
</feature>
<organism>
    <name type="scientific">Dechloromonas aromatica (strain RCB)</name>
    <dbReference type="NCBI Taxonomy" id="159087"/>
    <lineage>
        <taxon>Bacteria</taxon>
        <taxon>Pseudomonadati</taxon>
        <taxon>Pseudomonadota</taxon>
        <taxon>Betaproteobacteria</taxon>
        <taxon>Rhodocyclales</taxon>
        <taxon>Azonexaceae</taxon>
        <taxon>Dechloromonas</taxon>
    </lineage>
</organism>
<sequence length="408" mass="42504">MPVNYATPAADQLFPVAGVRLGVAEAEIRKKNRRDLTLVALDAGCTVAGVFTQNRFCAAPVQLCRNHLAGGHEIRALVINTGIANAGTGEPGRQTAQASCDAVAELLGIKAEQVLPFSTGVILEPLPVERLKAGLPAAKADLKADNWHAAAHAIMTTDTVAKAASRVVTVNGKKISISGVSKGAGMIKPNMATMLGFLATDASIAQGMLDKLVKEAADASFNCITVDGDTSTNDSFVMIASGQSGASFATETDAGWAEVKAAIIAVSVELAQAIVRDGEGATKFITVAVEGGKDSEECRKVGYAIGHSPLVKTAFFASDPNLGRILAAVGYAGINDLDVDGVRVWLDEVLVAEKGGRAAAYKEEDGARVMAQAEITVRVDLGRGAAKASVYTCDFSYDYVKINADYRS</sequence>
<dbReference type="EC" id="2.3.1.35" evidence="1"/>
<dbReference type="EC" id="2.3.1.1" evidence="1"/>
<dbReference type="EMBL" id="CP000089">
    <property type="protein sequence ID" value="AAZ48216.1"/>
    <property type="molecule type" value="Genomic_DNA"/>
</dbReference>
<dbReference type="SMR" id="Q47AB5"/>
<dbReference type="STRING" id="159087.Daro_3487"/>
<dbReference type="MEROPS" id="T05.001"/>
<dbReference type="KEGG" id="dar:Daro_3487"/>
<dbReference type="eggNOG" id="COG1364">
    <property type="taxonomic scope" value="Bacteria"/>
</dbReference>
<dbReference type="HOGENOM" id="CLU_027172_1_0_4"/>
<dbReference type="OrthoDB" id="9804242at2"/>
<dbReference type="UniPathway" id="UPA00068">
    <property type="reaction ID" value="UER00106"/>
</dbReference>
<dbReference type="UniPathway" id="UPA00068">
    <property type="reaction ID" value="UER00111"/>
</dbReference>
<dbReference type="GO" id="GO:0005737">
    <property type="term" value="C:cytoplasm"/>
    <property type="evidence" value="ECO:0007669"/>
    <property type="project" value="UniProtKB-SubCell"/>
</dbReference>
<dbReference type="GO" id="GO:0004358">
    <property type="term" value="F:glutamate N-acetyltransferase activity"/>
    <property type="evidence" value="ECO:0007669"/>
    <property type="project" value="UniProtKB-UniRule"/>
</dbReference>
<dbReference type="GO" id="GO:0004042">
    <property type="term" value="F:L-glutamate N-acetyltransferase activity"/>
    <property type="evidence" value="ECO:0007669"/>
    <property type="project" value="UniProtKB-UniRule"/>
</dbReference>
<dbReference type="GO" id="GO:0006526">
    <property type="term" value="P:L-arginine biosynthetic process"/>
    <property type="evidence" value="ECO:0007669"/>
    <property type="project" value="UniProtKB-UniRule"/>
</dbReference>
<dbReference type="GO" id="GO:0006592">
    <property type="term" value="P:ornithine biosynthetic process"/>
    <property type="evidence" value="ECO:0007669"/>
    <property type="project" value="TreeGrafter"/>
</dbReference>
<dbReference type="CDD" id="cd02152">
    <property type="entry name" value="OAT"/>
    <property type="match status" value="1"/>
</dbReference>
<dbReference type="FunFam" id="3.10.20.340:FF:000001">
    <property type="entry name" value="Arginine biosynthesis bifunctional protein ArgJ, chloroplastic"/>
    <property type="match status" value="1"/>
</dbReference>
<dbReference type="FunFam" id="3.60.70.12:FF:000001">
    <property type="entry name" value="Arginine biosynthesis bifunctional protein ArgJ, chloroplastic"/>
    <property type="match status" value="1"/>
</dbReference>
<dbReference type="Gene3D" id="3.10.20.340">
    <property type="entry name" value="ArgJ beta chain, C-terminal domain"/>
    <property type="match status" value="1"/>
</dbReference>
<dbReference type="Gene3D" id="3.60.70.12">
    <property type="entry name" value="L-amino peptidase D-ALA esterase/amidase"/>
    <property type="match status" value="1"/>
</dbReference>
<dbReference type="HAMAP" id="MF_01106">
    <property type="entry name" value="ArgJ"/>
    <property type="match status" value="1"/>
</dbReference>
<dbReference type="InterPro" id="IPR002813">
    <property type="entry name" value="Arg_biosynth_ArgJ"/>
</dbReference>
<dbReference type="InterPro" id="IPR016117">
    <property type="entry name" value="ArgJ-like_dom_sf"/>
</dbReference>
<dbReference type="InterPro" id="IPR042195">
    <property type="entry name" value="ArgJ_beta_C"/>
</dbReference>
<dbReference type="NCBIfam" id="TIGR00120">
    <property type="entry name" value="ArgJ"/>
    <property type="match status" value="1"/>
</dbReference>
<dbReference type="NCBIfam" id="NF003802">
    <property type="entry name" value="PRK05388.1"/>
    <property type="match status" value="1"/>
</dbReference>
<dbReference type="PANTHER" id="PTHR23100">
    <property type="entry name" value="ARGININE BIOSYNTHESIS BIFUNCTIONAL PROTEIN ARGJ"/>
    <property type="match status" value="1"/>
</dbReference>
<dbReference type="PANTHER" id="PTHR23100:SF0">
    <property type="entry name" value="ARGININE BIOSYNTHESIS BIFUNCTIONAL PROTEIN ARGJ, MITOCHONDRIAL"/>
    <property type="match status" value="1"/>
</dbReference>
<dbReference type="Pfam" id="PF01960">
    <property type="entry name" value="ArgJ"/>
    <property type="match status" value="1"/>
</dbReference>
<dbReference type="SUPFAM" id="SSF56266">
    <property type="entry name" value="DmpA/ArgJ-like"/>
    <property type="match status" value="1"/>
</dbReference>
<gene>
    <name evidence="1" type="primary">argJ</name>
    <name type="ordered locus">Daro_3487</name>
</gene>
<comment type="function">
    <text evidence="1">Catalyzes two activities which are involved in the cyclic version of arginine biosynthesis: the synthesis of N-acetylglutamate from glutamate and acetyl-CoA as the acetyl donor, and of ornithine by transacetylation between N(2)-acetylornithine and glutamate.</text>
</comment>
<comment type="catalytic activity">
    <reaction evidence="1">
        <text>N(2)-acetyl-L-ornithine + L-glutamate = N-acetyl-L-glutamate + L-ornithine</text>
        <dbReference type="Rhea" id="RHEA:15349"/>
        <dbReference type="ChEBI" id="CHEBI:29985"/>
        <dbReference type="ChEBI" id="CHEBI:44337"/>
        <dbReference type="ChEBI" id="CHEBI:46911"/>
        <dbReference type="ChEBI" id="CHEBI:57805"/>
        <dbReference type="EC" id="2.3.1.35"/>
    </reaction>
</comment>
<comment type="catalytic activity">
    <reaction evidence="1">
        <text>L-glutamate + acetyl-CoA = N-acetyl-L-glutamate + CoA + H(+)</text>
        <dbReference type="Rhea" id="RHEA:24292"/>
        <dbReference type="ChEBI" id="CHEBI:15378"/>
        <dbReference type="ChEBI" id="CHEBI:29985"/>
        <dbReference type="ChEBI" id="CHEBI:44337"/>
        <dbReference type="ChEBI" id="CHEBI:57287"/>
        <dbReference type="ChEBI" id="CHEBI:57288"/>
        <dbReference type="EC" id="2.3.1.1"/>
    </reaction>
</comment>
<comment type="pathway">
    <text evidence="1">Amino-acid biosynthesis; L-arginine biosynthesis; L-ornithine and N-acetyl-L-glutamate from L-glutamate and N(2)-acetyl-L-ornithine (cyclic): step 1/1.</text>
</comment>
<comment type="pathway">
    <text evidence="1">Amino-acid biosynthesis; L-arginine biosynthesis; N(2)-acetyl-L-ornithine from L-glutamate: step 1/4.</text>
</comment>
<comment type="subunit">
    <text evidence="1">Heterotetramer of two alpha and two beta chains.</text>
</comment>
<comment type="subcellular location">
    <subcellularLocation>
        <location evidence="1">Cytoplasm</location>
    </subcellularLocation>
</comment>
<comment type="similarity">
    <text evidence="1">Belongs to the ArgJ family.</text>
</comment>
<accession>Q47AB5</accession>
<reference key="1">
    <citation type="journal article" date="2009" name="BMC Genomics">
        <title>Metabolic analysis of the soil microbe Dechloromonas aromatica str. RCB: indications of a surprisingly complex life-style and cryptic anaerobic pathways for aromatic degradation.</title>
        <authorList>
            <person name="Salinero K.K."/>
            <person name="Keller K."/>
            <person name="Feil W.S."/>
            <person name="Feil H."/>
            <person name="Trong S."/>
            <person name="Di Bartolo G."/>
            <person name="Lapidus A."/>
        </authorList>
    </citation>
    <scope>NUCLEOTIDE SEQUENCE [LARGE SCALE GENOMIC DNA]</scope>
    <source>
        <strain>RCB</strain>
    </source>
</reference>